<name>RS13_BIFAA</name>
<feature type="chain" id="PRO_0000306568" description="Small ribosomal subunit protein uS13">
    <location>
        <begin position="1"/>
        <end position="125"/>
    </location>
</feature>
<feature type="region of interest" description="Disordered" evidence="2">
    <location>
        <begin position="90"/>
        <end position="125"/>
    </location>
</feature>
<gene>
    <name evidence="1" type="primary">rpsM</name>
    <name type="ordered locus">BAD_0345</name>
</gene>
<comment type="function">
    <text evidence="1">Located at the top of the head of the 30S subunit, it contacts several helices of the 16S rRNA. In the 70S ribosome it contacts the 23S rRNA (bridge B1a) and protein L5 of the 50S subunit (bridge B1b), connecting the 2 subunits; these bridges are implicated in subunit movement. Contacts the tRNAs in the A and P-sites.</text>
</comment>
<comment type="subunit">
    <text evidence="1">Part of the 30S ribosomal subunit. Forms a loose heterodimer with protein S19. Forms two bridges to the 50S subunit in the 70S ribosome.</text>
</comment>
<comment type="similarity">
    <text evidence="1">Belongs to the universal ribosomal protein uS13 family.</text>
</comment>
<comment type="sequence caution" evidence="3">
    <conflict type="erroneous initiation">
        <sequence resource="EMBL-CDS" id="BAF39126"/>
    </conflict>
</comment>
<reference key="1">
    <citation type="submission" date="2006-12" db="EMBL/GenBank/DDBJ databases">
        <title>Bifidobacterium adolescentis complete genome sequence.</title>
        <authorList>
            <person name="Suzuki T."/>
            <person name="Tsuda Y."/>
            <person name="Kanou N."/>
            <person name="Inoue T."/>
            <person name="Kumazaki K."/>
            <person name="Nagano S."/>
            <person name="Hirai S."/>
            <person name="Tanaka K."/>
            <person name="Watanabe K."/>
        </authorList>
    </citation>
    <scope>NUCLEOTIDE SEQUENCE [LARGE SCALE GENOMIC DNA]</scope>
    <source>
        <strain>ATCC 15703 / DSM 20083 / NCTC 11814 / E194a</strain>
    </source>
</reference>
<evidence type="ECO:0000255" key="1">
    <source>
        <dbReference type="HAMAP-Rule" id="MF_01315"/>
    </source>
</evidence>
<evidence type="ECO:0000256" key="2">
    <source>
        <dbReference type="SAM" id="MobiDB-lite"/>
    </source>
</evidence>
<evidence type="ECO:0000305" key="3"/>
<protein>
    <recommendedName>
        <fullName evidence="1">Small ribosomal subunit protein uS13</fullName>
    </recommendedName>
    <alternativeName>
        <fullName evidence="3">30S ribosomal protein S13</fullName>
    </alternativeName>
</protein>
<proteinExistence type="inferred from homology"/>
<organism>
    <name type="scientific">Bifidobacterium adolescentis (strain ATCC 15703 / DSM 20083 / NCTC 11814 / E194a)</name>
    <dbReference type="NCBI Taxonomy" id="367928"/>
    <lineage>
        <taxon>Bacteria</taxon>
        <taxon>Bacillati</taxon>
        <taxon>Actinomycetota</taxon>
        <taxon>Actinomycetes</taxon>
        <taxon>Bifidobacteriales</taxon>
        <taxon>Bifidobacteriaceae</taxon>
        <taxon>Bifidobacterium</taxon>
    </lineage>
</organism>
<accession>A1A093</accession>
<dbReference type="EMBL" id="AP009256">
    <property type="protein sequence ID" value="BAF39126.1"/>
    <property type="status" value="ALT_INIT"/>
    <property type="molecule type" value="Genomic_DNA"/>
</dbReference>
<dbReference type="RefSeq" id="WP_003808138.1">
    <property type="nucleotide sequence ID" value="NC_008618.1"/>
</dbReference>
<dbReference type="SMR" id="A1A093"/>
<dbReference type="STRING" id="367928.BAD_0345"/>
<dbReference type="PaxDb" id="1680-BADO_0352"/>
<dbReference type="GeneID" id="97501885"/>
<dbReference type="KEGG" id="bad:BAD_0345"/>
<dbReference type="HOGENOM" id="CLU_103849_1_2_11"/>
<dbReference type="Proteomes" id="UP000008702">
    <property type="component" value="Chromosome"/>
</dbReference>
<dbReference type="GO" id="GO:0005829">
    <property type="term" value="C:cytosol"/>
    <property type="evidence" value="ECO:0007669"/>
    <property type="project" value="TreeGrafter"/>
</dbReference>
<dbReference type="GO" id="GO:0015935">
    <property type="term" value="C:small ribosomal subunit"/>
    <property type="evidence" value="ECO:0007669"/>
    <property type="project" value="TreeGrafter"/>
</dbReference>
<dbReference type="GO" id="GO:0019843">
    <property type="term" value="F:rRNA binding"/>
    <property type="evidence" value="ECO:0007669"/>
    <property type="project" value="UniProtKB-UniRule"/>
</dbReference>
<dbReference type="GO" id="GO:0003735">
    <property type="term" value="F:structural constituent of ribosome"/>
    <property type="evidence" value="ECO:0007669"/>
    <property type="project" value="InterPro"/>
</dbReference>
<dbReference type="GO" id="GO:0000049">
    <property type="term" value="F:tRNA binding"/>
    <property type="evidence" value="ECO:0007669"/>
    <property type="project" value="UniProtKB-UniRule"/>
</dbReference>
<dbReference type="GO" id="GO:0006412">
    <property type="term" value="P:translation"/>
    <property type="evidence" value="ECO:0007669"/>
    <property type="project" value="UniProtKB-UniRule"/>
</dbReference>
<dbReference type="FunFam" id="1.10.8.50:FF:000001">
    <property type="entry name" value="30S ribosomal protein S13"/>
    <property type="match status" value="1"/>
</dbReference>
<dbReference type="FunFam" id="4.10.910.10:FF:000001">
    <property type="entry name" value="30S ribosomal protein S13"/>
    <property type="match status" value="1"/>
</dbReference>
<dbReference type="Gene3D" id="1.10.8.50">
    <property type="match status" value="1"/>
</dbReference>
<dbReference type="Gene3D" id="4.10.910.10">
    <property type="entry name" value="30s ribosomal protein s13, domain 2"/>
    <property type="match status" value="1"/>
</dbReference>
<dbReference type="HAMAP" id="MF_01315">
    <property type="entry name" value="Ribosomal_uS13"/>
    <property type="match status" value="1"/>
</dbReference>
<dbReference type="InterPro" id="IPR027437">
    <property type="entry name" value="Rbsml_uS13_C"/>
</dbReference>
<dbReference type="InterPro" id="IPR001892">
    <property type="entry name" value="Ribosomal_uS13"/>
</dbReference>
<dbReference type="InterPro" id="IPR010979">
    <property type="entry name" value="Ribosomal_uS13-like_H2TH"/>
</dbReference>
<dbReference type="InterPro" id="IPR019980">
    <property type="entry name" value="Ribosomal_uS13_bac-type"/>
</dbReference>
<dbReference type="InterPro" id="IPR018269">
    <property type="entry name" value="Ribosomal_uS13_CS"/>
</dbReference>
<dbReference type="NCBIfam" id="TIGR03631">
    <property type="entry name" value="uS13_bact"/>
    <property type="match status" value="1"/>
</dbReference>
<dbReference type="PANTHER" id="PTHR10871">
    <property type="entry name" value="30S RIBOSOMAL PROTEIN S13/40S RIBOSOMAL PROTEIN S18"/>
    <property type="match status" value="1"/>
</dbReference>
<dbReference type="PANTHER" id="PTHR10871:SF1">
    <property type="entry name" value="SMALL RIBOSOMAL SUBUNIT PROTEIN US13M"/>
    <property type="match status" value="1"/>
</dbReference>
<dbReference type="Pfam" id="PF00416">
    <property type="entry name" value="Ribosomal_S13"/>
    <property type="match status" value="1"/>
</dbReference>
<dbReference type="PIRSF" id="PIRSF002134">
    <property type="entry name" value="Ribosomal_S13"/>
    <property type="match status" value="1"/>
</dbReference>
<dbReference type="SUPFAM" id="SSF46946">
    <property type="entry name" value="S13-like H2TH domain"/>
    <property type="match status" value="1"/>
</dbReference>
<dbReference type="PROSITE" id="PS00646">
    <property type="entry name" value="RIBOSOMAL_S13_1"/>
    <property type="match status" value="1"/>
</dbReference>
<dbReference type="PROSITE" id="PS50159">
    <property type="entry name" value="RIBOSOMAL_S13_2"/>
    <property type="match status" value="1"/>
</dbReference>
<keyword id="KW-1185">Reference proteome</keyword>
<keyword id="KW-0687">Ribonucleoprotein</keyword>
<keyword id="KW-0689">Ribosomal protein</keyword>
<keyword id="KW-0694">RNA-binding</keyword>
<keyword id="KW-0699">rRNA-binding</keyword>
<keyword id="KW-0820">tRNA-binding</keyword>
<sequence>MARLAGVDIPNEKRIEIALTYIFGVGRTRAKETLAATGINPDIRVKDLTDEQLITLRDYLEGNYKIEGDLRREIDADIRRKIQINCYQGQRHRKGLPVRGQRTKTNARTRKGPKRTVAGKKKATK</sequence>